<evidence type="ECO:0000250" key="1"/>
<evidence type="ECO:0000255" key="2"/>
<evidence type="ECO:0000255" key="3">
    <source>
        <dbReference type="PROSITE-ProRule" id="PRU01360"/>
    </source>
</evidence>
<evidence type="ECO:0000305" key="4"/>
<organism>
    <name type="scientific">Escherichia coli O157:H7</name>
    <dbReference type="NCBI Taxonomy" id="83334"/>
    <lineage>
        <taxon>Bacteria</taxon>
        <taxon>Pseudomonadati</taxon>
        <taxon>Pseudomonadota</taxon>
        <taxon>Gammaproteobacteria</taxon>
        <taxon>Enterobacterales</taxon>
        <taxon>Enterobacteriaceae</taxon>
        <taxon>Escherichia</taxon>
    </lineage>
</organism>
<feature type="signal peptide" evidence="2">
    <location>
        <begin position="1"/>
        <end position="31"/>
    </location>
</feature>
<feature type="chain" id="PRO_0000248081" description="Catecholate siderophore receptor Fiu">
    <location>
        <begin position="32"/>
        <end position="760"/>
    </location>
</feature>
<feature type="domain" description="TBDR plug" evidence="3">
    <location>
        <begin position="67"/>
        <end position="175"/>
    </location>
</feature>
<feature type="domain" description="TBDR beta-barrel" evidence="3">
    <location>
        <begin position="180"/>
        <end position="760"/>
    </location>
</feature>
<feature type="short sequence motif" description="TonB C-terminal box" evidence="1">
    <location>
        <begin position="743"/>
        <end position="760"/>
    </location>
</feature>
<reference key="1">
    <citation type="journal article" date="2001" name="Nature">
        <title>Genome sequence of enterohaemorrhagic Escherichia coli O157:H7.</title>
        <authorList>
            <person name="Perna N.T."/>
            <person name="Plunkett G. III"/>
            <person name="Burland V."/>
            <person name="Mau B."/>
            <person name="Glasner J.D."/>
            <person name="Rose D.J."/>
            <person name="Mayhew G.F."/>
            <person name="Evans P.S."/>
            <person name="Gregor J."/>
            <person name="Kirkpatrick H.A."/>
            <person name="Posfai G."/>
            <person name="Hackett J."/>
            <person name="Klink S."/>
            <person name="Boutin A."/>
            <person name="Shao Y."/>
            <person name="Miller L."/>
            <person name="Grotbeck E.J."/>
            <person name="Davis N.W."/>
            <person name="Lim A."/>
            <person name="Dimalanta E.T."/>
            <person name="Potamousis K."/>
            <person name="Apodaca J."/>
            <person name="Anantharaman T.S."/>
            <person name="Lin J."/>
            <person name="Yen G."/>
            <person name="Schwartz D.C."/>
            <person name="Welch R.A."/>
            <person name="Blattner F.R."/>
        </authorList>
    </citation>
    <scope>NUCLEOTIDE SEQUENCE [LARGE SCALE GENOMIC DNA]</scope>
    <source>
        <strain>O157:H7 / EDL933 / ATCC 700927 / EHEC</strain>
    </source>
</reference>
<reference key="2">
    <citation type="journal article" date="2001" name="DNA Res.">
        <title>Complete genome sequence of enterohemorrhagic Escherichia coli O157:H7 and genomic comparison with a laboratory strain K-12.</title>
        <authorList>
            <person name="Hayashi T."/>
            <person name="Makino K."/>
            <person name="Ohnishi M."/>
            <person name="Kurokawa K."/>
            <person name="Ishii K."/>
            <person name="Yokoyama K."/>
            <person name="Han C.-G."/>
            <person name="Ohtsubo E."/>
            <person name="Nakayama K."/>
            <person name="Murata T."/>
            <person name="Tanaka M."/>
            <person name="Tobe T."/>
            <person name="Iida T."/>
            <person name="Takami H."/>
            <person name="Honda T."/>
            <person name="Sasakawa C."/>
            <person name="Ogasawara N."/>
            <person name="Yasunaga T."/>
            <person name="Kuhara S."/>
            <person name="Shiba T."/>
            <person name="Hattori M."/>
            <person name="Shinagawa H."/>
        </authorList>
    </citation>
    <scope>NUCLEOTIDE SEQUENCE [LARGE SCALE GENOMIC DNA]</scope>
    <source>
        <strain>O157:H7 / Sakai / RIMD 0509952 / EHEC</strain>
    </source>
</reference>
<proteinExistence type="inferred from homology"/>
<protein>
    <recommendedName>
        <fullName>Catecholate siderophore receptor Fiu</fullName>
    </recommendedName>
    <alternativeName>
        <fullName>Ferric iron uptake protein</fullName>
    </alternativeName>
    <alternativeName>
        <fullName>TonB-dependent receptor Fiu</fullName>
    </alternativeName>
</protein>
<keyword id="KW-0998">Cell outer membrane</keyword>
<keyword id="KW-0406">Ion transport</keyword>
<keyword id="KW-0408">Iron</keyword>
<keyword id="KW-0410">Iron transport</keyword>
<keyword id="KW-0472">Membrane</keyword>
<keyword id="KW-0675">Receptor</keyword>
<keyword id="KW-1185">Reference proteome</keyword>
<keyword id="KW-0732">Signal</keyword>
<keyword id="KW-0798">TonB box</keyword>
<keyword id="KW-0812">Transmembrane</keyword>
<keyword id="KW-1134">Transmembrane beta strand</keyword>
<keyword id="KW-0813">Transport</keyword>
<sequence length="760" mass="81956">MENNRNFPARQFHSLTFFAGLCIGITPVAQALAAEGQTNADDTLVVEASTPSLYAPQQSADPKFSRPVADTTRTMTVISEQVIKDQGATNLTDALKNVPGVGAFFAGENGNSTTGDAIYMRGADTSNSIYIDGIRDIGSVSRDTFNTEQVEVIKGPSGTDYGRSAPTGSINMISKQPRNDSGIDASASIGSAWFRRGTLDVNQVIGDTTAVRLNVMGEKTHDAGRDKVKNERYGVAPSIAFGLGTANRLYLNYLHVTQHNTPDGGIPTIGLPGYSAPSAGTATLNHSGKVDTHNFYGTDSDYDDSTTDTATMRFEHDINDNTTIRNTTRWSRVKQDYLMTAIMGGASNITQPTSDVNSWTWSRTANTKDVSNKILTNQTNLTSTFYTASIGHDVSTGVEFTRETQTNYGVNPVTLPAVNIYHPDSSIHPGGLTRNGANANGQTDTFAIYAFDTLQITRDFELNGGIRLDNYHTEYDSATACGGSGRGAITCPAGVAKGSPVTTVDTAKSGNLVNWKAGALYHLTENGNVYINYAVSQQPPGGNNFALAQSGSGNSANRTDFKPQKANTSEIGTKWQVLDKRLLLTAALFRTDIENEVEQNDDGTYSQYGKKRVEGYEISVAGNITPAWQVIGGYTQQKATIKNGKDVAQDGSSSLPYTPEHAFTLWSQYQATDDISVGAGARYIGSMHKGSDGAVGTPAFTEGYWVADAKLGYRVNRNLDFQLNVYNLFDTDYVASINKSGYRYHPGEPRTFLLTANMHF</sequence>
<gene>
    <name type="primary">fiu</name>
    <name type="ordered locus">Z1026</name>
    <name type="ordered locus">ECs0883</name>
</gene>
<comment type="function">
    <text evidence="1">Involved in the active transport across the outer membrane of iron complexed with catecholate siderophores such as dihydroxybenzoylserine and dihydroxybenzoate. It derives its energy for transport by interacting with the trans-periplasmic membrane protein TonB. Can also transport catechol-substituted cephalosporins. Receptor for microcins M, H47 and E492 (By similarity).</text>
</comment>
<comment type="subcellular location">
    <subcellularLocation>
        <location evidence="3">Cell outer membrane</location>
        <topology evidence="3">Multi-pass membrane protein</topology>
    </subcellularLocation>
</comment>
<comment type="similarity">
    <text evidence="4">Belongs to the TonB-dependent receptor family.</text>
</comment>
<name>FIU_ECO57</name>
<accession>Q8X7W7</accession>
<accession>Q7AGC1</accession>
<dbReference type="EMBL" id="AE005174">
    <property type="protein sequence ID" value="AAG55177.1"/>
    <property type="molecule type" value="Genomic_DNA"/>
</dbReference>
<dbReference type="EMBL" id="BA000007">
    <property type="protein sequence ID" value="BAB34306.1"/>
    <property type="molecule type" value="Genomic_DNA"/>
</dbReference>
<dbReference type="PIR" id="C90739">
    <property type="entry name" value="C90739"/>
</dbReference>
<dbReference type="PIR" id="E85589">
    <property type="entry name" value="E85589"/>
</dbReference>
<dbReference type="RefSeq" id="NP_308910.1">
    <property type="nucleotide sequence ID" value="NC_002695.1"/>
</dbReference>
<dbReference type="RefSeq" id="WP_000430049.1">
    <property type="nucleotide sequence ID" value="NZ_SEKU01000006.1"/>
</dbReference>
<dbReference type="SMR" id="Q8X7W7"/>
<dbReference type="STRING" id="155864.Z1026"/>
<dbReference type="GeneID" id="917629"/>
<dbReference type="KEGG" id="ece:Z1026"/>
<dbReference type="KEGG" id="ecs:ECs_0883"/>
<dbReference type="PATRIC" id="fig|386585.9.peg.997"/>
<dbReference type="eggNOG" id="COG4774">
    <property type="taxonomic scope" value="Bacteria"/>
</dbReference>
<dbReference type="HOGENOM" id="CLU_008287_9_1_6"/>
<dbReference type="OMA" id="TANYVHT"/>
<dbReference type="Proteomes" id="UP000000558">
    <property type="component" value="Chromosome"/>
</dbReference>
<dbReference type="Proteomes" id="UP000002519">
    <property type="component" value="Chromosome"/>
</dbReference>
<dbReference type="GO" id="GO:0009279">
    <property type="term" value="C:cell outer membrane"/>
    <property type="evidence" value="ECO:0007669"/>
    <property type="project" value="UniProtKB-SubCell"/>
</dbReference>
<dbReference type="GO" id="GO:0015344">
    <property type="term" value="F:siderophore uptake transmembrane transporter activity"/>
    <property type="evidence" value="ECO:0007669"/>
    <property type="project" value="TreeGrafter"/>
</dbReference>
<dbReference type="GO" id="GO:0038023">
    <property type="term" value="F:signaling receptor activity"/>
    <property type="evidence" value="ECO:0007669"/>
    <property type="project" value="InterPro"/>
</dbReference>
<dbReference type="CDD" id="cd01347">
    <property type="entry name" value="ligand_gated_channel"/>
    <property type="match status" value="1"/>
</dbReference>
<dbReference type="FunFam" id="2.40.170.20:FF:000006">
    <property type="entry name" value="Catecholate siderophore receptor fiu"/>
    <property type="match status" value="1"/>
</dbReference>
<dbReference type="FunFam" id="2.170.130.10:FF:000001">
    <property type="entry name" value="Catecholate siderophore TonB-dependent receptor"/>
    <property type="match status" value="1"/>
</dbReference>
<dbReference type="Gene3D" id="2.40.170.20">
    <property type="entry name" value="TonB-dependent receptor, beta-barrel domain"/>
    <property type="match status" value="1"/>
</dbReference>
<dbReference type="Gene3D" id="2.170.130.10">
    <property type="entry name" value="TonB-dependent receptor, plug domain"/>
    <property type="match status" value="1"/>
</dbReference>
<dbReference type="InterPro" id="IPR012910">
    <property type="entry name" value="Plug_dom"/>
</dbReference>
<dbReference type="InterPro" id="IPR037066">
    <property type="entry name" value="Plug_dom_sf"/>
</dbReference>
<dbReference type="InterPro" id="IPR039426">
    <property type="entry name" value="TonB-dep_rcpt-like"/>
</dbReference>
<dbReference type="InterPro" id="IPR000531">
    <property type="entry name" value="TonB-dep_rcpt_b-brl"/>
</dbReference>
<dbReference type="InterPro" id="IPR010916">
    <property type="entry name" value="TonB_box_CS"/>
</dbReference>
<dbReference type="InterPro" id="IPR036942">
    <property type="entry name" value="TonB_rcpt_b-brl_sf"/>
</dbReference>
<dbReference type="InterPro" id="IPR010105">
    <property type="entry name" value="TonB_sidphr_rcpt"/>
</dbReference>
<dbReference type="NCBIfam" id="NF007349">
    <property type="entry name" value="PRK09840.1"/>
    <property type="match status" value="1"/>
</dbReference>
<dbReference type="NCBIfam" id="TIGR01783">
    <property type="entry name" value="TonB-siderophor"/>
    <property type="match status" value="1"/>
</dbReference>
<dbReference type="PANTHER" id="PTHR32552:SF89">
    <property type="entry name" value="CATECHOLATE SIDEROPHORE RECEPTOR FIU"/>
    <property type="match status" value="1"/>
</dbReference>
<dbReference type="PANTHER" id="PTHR32552">
    <property type="entry name" value="FERRICHROME IRON RECEPTOR-RELATED"/>
    <property type="match status" value="1"/>
</dbReference>
<dbReference type="Pfam" id="PF07715">
    <property type="entry name" value="Plug"/>
    <property type="match status" value="1"/>
</dbReference>
<dbReference type="Pfam" id="PF00593">
    <property type="entry name" value="TonB_dep_Rec_b-barrel"/>
    <property type="match status" value="1"/>
</dbReference>
<dbReference type="SUPFAM" id="SSF56935">
    <property type="entry name" value="Porins"/>
    <property type="match status" value="1"/>
</dbReference>
<dbReference type="PROSITE" id="PS00430">
    <property type="entry name" value="TONB_DEPENDENT_REC_1"/>
    <property type="match status" value="1"/>
</dbReference>
<dbReference type="PROSITE" id="PS52016">
    <property type="entry name" value="TONB_DEPENDENT_REC_3"/>
    <property type="match status" value="1"/>
</dbReference>